<reference key="1">
    <citation type="journal article" date="2006" name="J. Bacteriol.">
        <title>The genome sequence of the obligately chemolithoautotrophic, facultatively anaerobic bacterium Thiobacillus denitrificans.</title>
        <authorList>
            <person name="Beller H.R."/>
            <person name="Chain P.S."/>
            <person name="Letain T.E."/>
            <person name="Chakicherla A."/>
            <person name="Larimer F.W."/>
            <person name="Richardson P.M."/>
            <person name="Coleman M.A."/>
            <person name="Wood A.P."/>
            <person name="Kelly D.P."/>
        </authorList>
    </citation>
    <scope>NUCLEOTIDE SEQUENCE [LARGE SCALE GENOMIC DNA]</scope>
    <source>
        <strain>ATCC 25259 / T1</strain>
    </source>
</reference>
<accession>Q3SG95</accession>
<name>SECB_THIDA</name>
<proteinExistence type="inferred from homology"/>
<feature type="chain" id="PRO_0000318268" description="Protein-export protein SecB">
    <location>
        <begin position="1"/>
        <end position="152"/>
    </location>
</feature>
<keyword id="KW-0143">Chaperone</keyword>
<keyword id="KW-0963">Cytoplasm</keyword>
<keyword id="KW-0653">Protein transport</keyword>
<keyword id="KW-1185">Reference proteome</keyword>
<keyword id="KW-0811">Translocation</keyword>
<keyword id="KW-0813">Transport</keyword>
<organism>
    <name type="scientific">Thiobacillus denitrificans (strain ATCC 25259 / T1)</name>
    <dbReference type="NCBI Taxonomy" id="292415"/>
    <lineage>
        <taxon>Bacteria</taxon>
        <taxon>Pseudomonadati</taxon>
        <taxon>Pseudomonadota</taxon>
        <taxon>Betaproteobacteria</taxon>
        <taxon>Nitrosomonadales</taxon>
        <taxon>Thiobacillaceae</taxon>
        <taxon>Thiobacillus</taxon>
    </lineage>
</organism>
<sequence>MSDAQQPVFNIEKLYVKDLSVEVPNAPAVYLEREAPQMEVNMSTESRALNEDMYHSSITVTVTAKLGDKTMFLVECTQAGIFRIQNVPQDQMPMVLGIGCPNIVFPYLRETVSDVVIRAGFPPLLLNPVNFEAIFVQQQQAQQQQAGAAQTH</sequence>
<dbReference type="EMBL" id="CP000116">
    <property type="protein sequence ID" value="AAZ98355.1"/>
    <property type="molecule type" value="Genomic_DNA"/>
</dbReference>
<dbReference type="RefSeq" id="WP_011312914.1">
    <property type="nucleotide sequence ID" value="NC_007404.1"/>
</dbReference>
<dbReference type="SMR" id="Q3SG95"/>
<dbReference type="STRING" id="292415.Tbd_2402"/>
<dbReference type="KEGG" id="tbd:Tbd_2402"/>
<dbReference type="eggNOG" id="COG1952">
    <property type="taxonomic scope" value="Bacteria"/>
</dbReference>
<dbReference type="HOGENOM" id="CLU_111574_1_0_4"/>
<dbReference type="OrthoDB" id="9795145at2"/>
<dbReference type="Proteomes" id="UP000008291">
    <property type="component" value="Chromosome"/>
</dbReference>
<dbReference type="GO" id="GO:0005737">
    <property type="term" value="C:cytoplasm"/>
    <property type="evidence" value="ECO:0007669"/>
    <property type="project" value="UniProtKB-SubCell"/>
</dbReference>
<dbReference type="GO" id="GO:0051082">
    <property type="term" value="F:unfolded protein binding"/>
    <property type="evidence" value="ECO:0007669"/>
    <property type="project" value="InterPro"/>
</dbReference>
<dbReference type="GO" id="GO:0006457">
    <property type="term" value="P:protein folding"/>
    <property type="evidence" value="ECO:0007669"/>
    <property type="project" value="UniProtKB-UniRule"/>
</dbReference>
<dbReference type="GO" id="GO:0051262">
    <property type="term" value="P:protein tetramerization"/>
    <property type="evidence" value="ECO:0007669"/>
    <property type="project" value="InterPro"/>
</dbReference>
<dbReference type="GO" id="GO:0015031">
    <property type="term" value="P:protein transport"/>
    <property type="evidence" value="ECO:0007669"/>
    <property type="project" value="UniProtKB-UniRule"/>
</dbReference>
<dbReference type="Gene3D" id="3.10.420.10">
    <property type="entry name" value="SecB-like"/>
    <property type="match status" value="1"/>
</dbReference>
<dbReference type="HAMAP" id="MF_00821">
    <property type="entry name" value="SecB"/>
    <property type="match status" value="1"/>
</dbReference>
<dbReference type="InterPro" id="IPR003708">
    <property type="entry name" value="SecB"/>
</dbReference>
<dbReference type="InterPro" id="IPR035958">
    <property type="entry name" value="SecB-like_sf"/>
</dbReference>
<dbReference type="NCBIfam" id="NF004392">
    <property type="entry name" value="PRK05751.1-3"/>
    <property type="match status" value="1"/>
</dbReference>
<dbReference type="NCBIfam" id="NF004393">
    <property type="entry name" value="PRK05751.1-4"/>
    <property type="match status" value="1"/>
</dbReference>
<dbReference type="NCBIfam" id="NF004394">
    <property type="entry name" value="PRK05751.1-5"/>
    <property type="match status" value="1"/>
</dbReference>
<dbReference type="NCBIfam" id="TIGR00809">
    <property type="entry name" value="secB"/>
    <property type="match status" value="1"/>
</dbReference>
<dbReference type="PANTHER" id="PTHR36918">
    <property type="match status" value="1"/>
</dbReference>
<dbReference type="PANTHER" id="PTHR36918:SF1">
    <property type="entry name" value="PROTEIN-EXPORT PROTEIN SECB"/>
    <property type="match status" value="1"/>
</dbReference>
<dbReference type="Pfam" id="PF02556">
    <property type="entry name" value="SecB"/>
    <property type="match status" value="1"/>
</dbReference>
<dbReference type="PRINTS" id="PR01594">
    <property type="entry name" value="SECBCHAPRONE"/>
</dbReference>
<dbReference type="SUPFAM" id="SSF54611">
    <property type="entry name" value="SecB-like"/>
    <property type="match status" value="1"/>
</dbReference>
<gene>
    <name evidence="1" type="primary">secB</name>
    <name type="ordered locus">Tbd_2402</name>
</gene>
<comment type="function">
    <text evidence="1">One of the proteins required for the normal export of preproteins out of the cell cytoplasm. It is a molecular chaperone that binds to a subset of precursor proteins, maintaining them in a translocation-competent state. It also specifically binds to its receptor SecA.</text>
</comment>
<comment type="subunit">
    <text evidence="1">Homotetramer, a dimer of dimers. One homotetramer interacts with 1 SecA dimer.</text>
</comment>
<comment type="subcellular location">
    <subcellularLocation>
        <location evidence="1">Cytoplasm</location>
    </subcellularLocation>
</comment>
<comment type="similarity">
    <text evidence="1">Belongs to the SecB family.</text>
</comment>
<protein>
    <recommendedName>
        <fullName evidence="1">Protein-export protein SecB</fullName>
    </recommendedName>
</protein>
<evidence type="ECO:0000255" key="1">
    <source>
        <dbReference type="HAMAP-Rule" id="MF_00821"/>
    </source>
</evidence>